<gene>
    <name type="ORF">GH12371</name>
</gene>
<dbReference type="EMBL" id="CH916370">
    <property type="protein sequence ID" value="EDV99544.1"/>
    <property type="molecule type" value="Genomic_DNA"/>
</dbReference>
<dbReference type="SMR" id="B4JIY0"/>
<dbReference type="FunCoup" id="B4JIY0">
    <property type="interactions" value="2392"/>
</dbReference>
<dbReference type="STRING" id="7222.B4JIY0"/>
<dbReference type="EnsemblMetazoa" id="FBtr0147785">
    <property type="protein sequence ID" value="FBpp0146277"/>
    <property type="gene ID" value="FBgn0119850"/>
</dbReference>
<dbReference type="EnsemblMetazoa" id="XM_001990884.3">
    <property type="protein sequence ID" value="XP_001990920.1"/>
    <property type="gene ID" value="LOC6564884"/>
</dbReference>
<dbReference type="GeneID" id="6564884"/>
<dbReference type="KEGG" id="dgr:6564884"/>
<dbReference type="CTD" id="79876"/>
<dbReference type="eggNOG" id="KOG2336">
    <property type="taxonomic scope" value="Eukaryota"/>
</dbReference>
<dbReference type="HOGENOM" id="CLU_013325_0_1_1"/>
<dbReference type="InParanoid" id="B4JIY0"/>
<dbReference type="OMA" id="MNIVKDY"/>
<dbReference type="OrthoDB" id="206053at2759"/>
<dbReference type="PhylomeDB" id="B4JIY0"/>
<dbReference type="Proteomes" id="UP000001070">
    <property type="component" value="Unassembled WGS sequence"/>
</dbReference>
<dbReference type="GO" id="GO:0005829">
    <property type="term" value="C:cytosol"/>
    <property type="evidence" value="ECO:0007669"/>
    <property type="project" value="TreeGrafter"/>
</dbReference>
<dbReference type="GO" id="GO:0005524">
    <property type="term" value="F:ATP binding"/>
    <property type="evidence" value="ECO:0007669"/>
    <property type="project" value="UniProtKB-KW"/>
</dbReference>
<dbReference type="GO" id="GO:0046872">
    <property type="term" value="F:metal ion binding"/>
    <property type="evidence" value="ECO:0007669"/>
    <property type="project" value="UniProtKB-KW"/>
</dbReference>
<dbReference type="GO" id="GO:0071566">
    <property type="term" value="F:UFM1 activating enzyme activity"/>
    <property type="evidence" value="ECO:0007669"/>
    <property type="project" value="TreeGrafter"/>
</dbReference>
<dbReference type="GO" id="GO:0050905">
    <property type="term" value="P:neuromuscular process"/>
    <property type="evidence" value="ECO:0007669"/>
    <property type="project" value="EnsemblMetazoa"/>
</dbReference>
<dbReference type="GO" id="GO:0071569">
    <property type="term" value="P:protein ufmylation"/>
    <property type="evidence" value="ECO:0007669"/>
    <property type="project" value="TreeGrafter"/>
</dbReference>
<dbReference type="CDD" id="cd00757">
    <property type="entry name" value="ThiF_MoeB_HesA_family"/>
    <property type="match status" value="1"/>
</dbReference>
<dbReference type="FunFam" id="3.40.50.720:FF:000066">
    <property type="entry name" value="Putative ubiquitin-like modifier-activating enzyme 5"/>
    <property type="match status" value="1"/>
</dbReference>
<dbReference type="Gene3D" id="3.40.50.720">
    <property type="entry name" value="NAD(P)-binding Rossmann-like Domain"/>
    <property type="match status" value="1"/>
</dbReference>
<dbReference type="InterPro" id="IPR029752">
    <property type="entry name" value="D-isomer_DH_CS1"/>
</dbReference>
<dbReference type="InterPro" id="IPR045886">
    <property type="entry name" value="ThiF/MoeB/HesA"/>
</dbReference>
<dbReference type="InterPro" id="IPR000594">
    <property type="entry name" value="ThiF_NAD_FAD-bd"/>
</dbReference>
<dbReference type="InterPro" id="IPR035985">
    <property type="entry name" value="Ubiquitin-activating_enz"/>
</dbReference>
<dbReference type="PANTHER" id="PTHR10953">
    <property type="entry name" value="UBIQUITIN-ACTIVATING ENZYME E1"/>
    <property type="match status" value="1"/>
</dbReference>
<dbReference type="PANTHER" id="PTHR10953:SF9">
    <property type="entry name" value="UBIQUITIN-LIKE MODIFIER-ACTIVATING ENZYME 5"/>
    <property type="match status" value="1"/>
</dbReference>
<dbReference type="Pfam" id="PF00899">
    <property type="entry name" value="ThiF"/>
    <property type="match status" value="1"/>
</dbReference>
<dbReference type="SUPFAM" id="SSF69572">
    <property type="entry name" value="Activating enzymes of the ubiquitin-like proteins"/>
    <property type="match status" value="1"/>
</dbReference>
<keyword id="KW-0067">ATP-binding</keyword>
<keyword id="KW-0479">Metal-binding</keyword>
<keyword id="KW-0547">Nucleotide-binding</keyword>
<keyword id="KW-1185">Reference proteome</keyword>
<keyword id="KW-0833">Ubl conjugation pathway</keyword>
<keyword id="KW-0862">Zinc</keyword>
<evidence type="ECO:0000250" key="1"/>
<evidence type="ECO:0000305" key="2"/>
<proteinExistence type="inferred from homology"/>
<feature type="chain" id="PRO_0000391943" description="Ubiquitin-like modifier-activating enzyme 5">
    <location>
        <begin position="1"/>
        <end position="398"/>
    </location>
</feature>
<feature type="active site" description="Glycyl thioester intermediate" evidence="1">
    <location>
        <position position="243"/>
    </location>
</feature>
<feature type="binding site" evidence="1">
    <location>
        <position position="76"/>
    </location>
    <ligand>
        <name>ATP</name>
        <dbReference type="ChEBI" id="CHEBI:30616"/>
    </ligand>
</feature>
<feature type="binding site" evidence="1">
    <location>
        <position position="97"/>
    </location>
    <ligand>
        <name>ATP</name>
        <dbReference type="ChEBI" id="CHEBI:30616"/>
    </ligand>
</feature>
<feature type="binding site" evidence="1">
    <location>
        <position position="120"/>
    </location>
    <ligand>
        <name>ATP</name>
        <dbReference type="ChEBI" id="CHEBI:30616"/>
    </ligand>
</feature>
<feature type="binding site" evidence="1">
    <location>
        <position position="143"/>
    </location>
    <ligand>
        <name>ATP</name>
        <dbReference type="ChEBI" id="CHEBI:30616"/>
    </ligand>
</feature>
<feature type="binding site" evidence="1">
    <location>
        <position position="177"/>
    </location>
    <ligand>
        <name>ATP</name>
        <dbReference type="ChEBI" id="CHEBI:30616"/>
    </ligand>
</feature>
<feature type="binding site" evidence="1">
    <location>
        <position position="219"/>
    </location>
    <ligand>
        <name>Zn(2+)</name>
        <dbReference type="ChEBI" id="CHEBI:29105"/>
    </ligand>
</feature>
<feature type="binding site" evidence="1">
    <location>
        <position position="222"/>
    </location>
    <ligand>
        <name>Zn(2+)</name>
        <dbReference type="ChEBI" id="CHEBI:29105"/>
    </ligand>
</feature>
<feature type="binding site" evidence="1">
    <location>
        <position position="296"/>
    </location>
    <ligand>
        <name>Zn(2+)</name>
        <dbReference type="ChEBI" id="CHEBI:29105"/>
    </ligand>
</feature>
<feature type="binding site" evidence="1">
    <location>
        <position position="301"/>
    </location>
    <ligand>
        <name>Zn(2+)</name>
        <dbReference type="ChEBI" id="CHEBI:29105"/>
    </ligand>
</feature>
<protein>
    <recommendedName>
        <fullName>Ubiquitin-like modifier-activating enzyme 5</fullName>
        <shortName>Ubiquitin-activating enzyme 5</shortName>
    </recommendedName>
</protein>
<organism>
    <name type="scientific">Drosophila grimshawi</name>
    <name type="common">Hawaiian fruit fly</name>
    <name type="synonym">Idiomyia grimshawi</name>
    <dbReference type="NCBI Taxonomy" id="7222"/>
    <lineage>
        <taxon>Eukaryota</taxon>
        <taxon>Metazoa</taxon>
        <taxon>Ecdysozoa</taxon>
        <taxon>Arthropoda</taxon>
        <taxon>Hexapoda</taxon>
        <taxon>Insecta</taxon>
        <taxon>Pterygota</taxon>
        <taxon>Neoptera</taxon>
        <taxon>Endopterygota</taxon>
        <taxon>Diptera</taxon>
        <taxon>Brachycera</taxon>
        <taxon>Muscomorpha</taxon>
        <taxon>Ephydroidea</taxon>
        <taxon>Drosophilidae</taxon>
        <taxon>Drosophila</taxon>
        <taxon>Hawaiian Drosophila</taxon>
    </lineage>
</organism>
<comment type="function">
    <text evidence="1">E1-like enzyme which activates UFM1.</text>
</comment>
<comment type="similarity">
    <text evidence="2">Belongs to the ubiquitin-activating E1 family. UBA5 subfamily.</text>
</comment>
<name>UBA5_DROGR</name>
<accession>B4JIY0</accession>
<reference key="1">
    <citation type="journal article" date="2007" name="Nature">
        <title>Evolution of genes and genomes on the Drosophila phylogeny.</title>
        <authorList>
            <consortium name="Drosophila 12 genomes consortium"/>
        </authorList>
    </citation>
    <scope>NUCLEOTIDE SEQUENCE [LARGE SCALE GENOMIC DNA]</scope>
    <source>
        <strain>Tucson 15287-2541.00</strain>
    </source>
</reference>
<sequence length="398" mass="43718">MSAAIDELQAIIAELKSELEEQKTTTRNARERIERMSAEVVDSNPYSRLMALQRMNIVKDYERIRDKAVAIVGVGGVGSVTADMLTRCGIGKLILFDYDKVELANMNRLFFTPDQAGLSKVEAAARTLSFINPDVCIETHNYNITTVDNFDQFLSTISASGIAVGQPVDLVLSCVDNFEARMAINAACNEKNMNWFESGVSENAVSGHIQFVRPGDTACFACAPPLVVAENIDERTLKREGVCAASLPTTMGITASLLVQNALKYLLNFGEVSDYLGYNALSDFFPKMTLRPNTQCDDRNCLVRQKEFHLRPKPVEKLVEVEVSDEPLHACNDWGIELVADNVPTTTTKSPENTNVAFGLRLAYEAPDKSEKSETTATAGDGVSEASLEELMAQMKSM</sequence>